<proteinExistence type="inferred from homology"/>
<protein>
    <recommendedName>
        <fullName evidence="1">MEMO1 family protein M164_2061</fullName>
    </recommendedName>
</protein>
<name>Y2061_SACI6</name>
<sequence length="284" mass="32198">MKRLPAVAGSFYESDPKKLKMQIEWSFRHNIGPRDIPKQTYEKKKRDNLFFVVPHAGYIYSGPVAAHSYYYLVSEGRPDVVIILGPNHTGLGSYVSAWPKGEWETPLGSVKIDEEILMQLVKESEVIDLDEKSHLYEHSIEVQLPFLQYFFDDDFKIVPIVIMMQTPEIAEFLADAIYNVMQKNPDKDIVVLASSDMNHYDPHEITVKKDEEAIEKIQQLDYKGLYEVVEGKDVTLCGYGPIMVNLILAKKFGKKAYILKHATSGDTSGPKDSVVGYLAARFGS</sequence>
<comment type="similarity">
    <text evidence="1">Belongs to the MEMO1 family.</text>
</comment>
<organism>
    <name type="scientific">Saccharolobus islandicus (strain M.16.4 / Kamchatka #3)</name>
    <name type="common">Sulfolobus islandicus</name>
    <dbReference type="NCBI Taxonomy" id="426118"/>
    <lineage>
        <taxon>Archaea</taxon>
        <taxon>Thermoproteota</taxon>
        <taxon>Thermoprotei</taxon>
        <taxon>Sulfolobales</taxon>
        <taxon>Sulfolobaceae</taxon>
        <taxon>Saccharolobus</taxon>
    </lineage>
</organism>
<gene>
    <name type="ordered locus">M164_2061</name>
</gene>
<accession>C4KJ99</accession>
<reference key="1">
    <citation type="journal article" date="2009" name="Proc. Natl. Acad. Sci. U.S.A.">
        <title>Biogeography of the Sulfolobus islandicus pan-genome.</title>
        <authorList>
            <person name="Reno M.L."/>
            <person name="Held N.L."/>
            <person name="Fields C.J."/>
            <person name="Burke P.V."/>
            <person name="Whitaker R.J."/>
        </authorList>
    </citation>
    <scope>NUCLEOTIDE SEQUENCE [LARGE SCALE GENOMIC DNA]</scope>
    <source>
        <strain>M.16.4 / Kamchatka #3</strain>
    </source>
</reference>
<evidence type="ECO:0000255" key="1">
    <source>
        <dbReference type="HAMAP-Rule" id="MF_00055"/>
    </source>
</evidence>
<feature type="chain" id="PRO_1000202325" description="MEMO1 family protein M164_2061">
    <location>
        <begin position="1"/>
        <end position="284"/>
    </location>
</feature>
<dbReference type="EMBL" id="CP001402">
    <property type="protein sequence ID" value="ACR42663.1"/>
    <property type="molecule type" value="Genomic_DNA"/>
</dbReference>
<dbReference type="SMR" id="C4KJ99"/>
<dbReference type="KEGG" id="sid:M164_2061"/>
<dbReference type="HOGENOM" id="CLU_038085_2_0_2"/>
<dbReference type="Proteomes" id="UP000001479">
    <property type="component" value="Chromosome"/>
</dbReference>
<dbReference type="CDD" id="cd07361">
    <property type="entry name" value="MEMO_like"/>
    <property type="match status" value="1"/>
</dbReference>
<dbReference type="Gene3D" id="3.40.830.10">
    <property type="entry name" value="LigB-like"/>
    <property type="match status" value="1"/>
</dbReference>
<dbReference type="HAMAP" id="MF_00055">
    <property type="entry name" value="MEMO1"/>
    <property type="match status" value="1"/>
</dbReference>
<dbReference type="InterPro" id="IPR002737">
    <property type="entry name" value="MEMO1_fam"/>
</dbReference>
<dbReference type="NCBIfam" id="TIGR04336">
    <property type="entry name" value="AmmeMemoSam_B"/>
    <property type="match status" value="1"/>
</dbReference>
<dbReference type="PANTHER" id="PTHR11060">
    <property type="entry name" value="PROTEIN MEMO1"/>
    <property type="match status" value="1"/>
</dbReference>
<dbReference type="PANTHER" id="PTHR11060:SF0">
    <property type="entry name" value="PROTEIN MEMO1"/>
    <property type="match status" value="1"/>
</dbReference>
<dbReference type="Pfam" id="PF01875">
    <property type="entry name" value="Memo"/>
    <property type="match status" value="1"/>
</dbReference>